<accession>B2UV60</accession>
<reference key="1">
    <citation type="submission" date="2008-05" db="EMBL/GenBank/DDBJ databases">
        <title>Genome sequence of Helicobacter pylori from the remote Amazon: traces of Asian ancestry of the first Americans.</title>
        <authorList>
            <person name="Kersulyte D."/>
            <person name="Kalia A."/>
            <person name="Gilman R.H."/>
            <person name="Berg D.E."/>
        </authorList>
    </citation>
    <scope>NUCLEOTIDE SEQUENCE [LARGE SCALE GENOMIC DNA]</scope>
    <source>
        <strain>Shi470</strain>
    </source>
</reference>
<sequence>MKVRPSVKKMCDKCKIIKRRGVIRVICATPKHKQRQG</sequence>
<feature type="chain" id="PRO_1000101032" description="Large ribosomal subunit protein bL36">
    <location>
        <begin position="1"/>
        <end position="37"/>
    </location>
</feature>
<protein>
    <recommendedName>
        <fullName evidence="1">Large ribosomal subunit protein bL36</fullName>
    </recommendedName>
    <alternativeName>
        <fullName evidence="2">50S ribosomal protein L36</fullName>
    </alternativeName>
</protein>
<name>RL36_HELPS</name>
<evidence type="ECO:0000255" key="1">
    <source>
        <dbReference type="HAMAP-Rule" id="MF_00251"/>
    </source>
</evidence>
<evidence type="ECO:0000305" key="2"/>
<proteinExistence type="inferred from homology"/>
<dbReference type="EMBL" id="CP001072">
    <property type="protein sequence ID" value="ACD48742.1"/>
    <property type="molecule type" value="Genomic_DNA"/>
</dbReference>
<dbReference type="RefSeq" id="WP_000868339.1">
    <property type="nucleotide sequence ID" value="NC_010698.2"/>
</dbReference>
<dbReference type="SMR" id="B2UV60"/>
<dbReference type="GeneID" id="31757687"/>
<dbReference type="KEGG" id="hps:HPSH_06710"/>
<dbReference type="HOGENOM" id="CLU_135723_6_2_7"/>
<dbReference type="GO" id="GO:0005737">
    <property type="term" value="C:cytoplasm"/>
    <property type="evidence" value="ECO:0007669"/>
    <property type="project" value="UniProtKB-ARBA"/>
</dbReference>
<dbReference type="GO" id="GO:1990904">
    <property type="term" value="C:ribonucleoprotein complex"/>
    <property type="evidence" value="ECO:0007669"/>
    <property type="project" value="UniProtKB-KW"/>
</dbReference>
<dbReference type="GO" id="GO:0005840">
    <property type="term" value="C:ribosome"/>
    <property type="evidence" value="ECO:0007669"/>
    <property type="project" value="UniProtKB-KW"/>
</dbReference>
<dbReference type="GO" id="GO:0003735">
    <property type="term" value="F:structural constituent of ribosome"/>
    <property type="evidence" value="ECO:0007669"/>
    <property type="project" value="InterPro"/>
</dbReference>
<dbReference type="GO" id="GO:0006412">
    <property type="term" value="P:translation"/>
    <property type="evidence" value="ECO:0007669"/>
    <property type="project" value="UniProtKB-UniRule"/>
</dbReference>
<dbReference type="HAMAP" id="MF_00251">
    <property type="entry name" value="Ribosomal_bL36"/>
    <property type="match status" value="1"/>
</dbReference>
<dbReference type="InterPro" id="IPR000473">
    <property type="entry name" value="Ribosomal_bL36"/>
</dbReference>
<dbReference type="InterPro" id="IPR035977">
    <property type="entry name" value="Ribosomal_bL36_sp"/>
</dbReference>
<dbReference type="NCBIfam" id="TIGR01022">
    <property type="entry name" value="rpmJ_bact"/>
    <property type="match status" value="1"/>
</dbReference>
<dbReference type="PANTHER" id="PTHR42888">
    <property type="entry name" value="50S RIBOSOMAL PROTEIN L36, CHLOROPLASTIC"/>
    <property type="match status" value="1"/>
</dbReference>
<dbReference type="PANTHER" id="PTHR42888:SF1">
    <property type="entry name" value="LARGE RIBOSOMAL SUBUNIT PROTEIN BL36C"/>
    <property type="match status" value="1"/>
</dbReference>
<dbReference type="Pfam" id="PF00444">
    <property type="entry name" value="Ribosomal_L36"/>
    <property type="match status" value="1"/>
</dbReference>
<dbReference type="SUPFAM" id="SSF57840">
    <property type="entry name" value="Ribosomal protein L36"/>
    <property type="match status" value="1"/>
</dbReference>
<dbReference type="PROSITE" id="PS00828">
    <property type="entry name" value="RIBOSOMAL_L36"/>
    <property type="match status" value="1"/>
</dbReference>
<keyword id="KW-0687">Ribonucleoprotein</keyword>
<keyword id="KW-0689">Ribosomal protein</keyword>
<gene>
    <name evidence="1" type="primary">rpmJ</name>
    <name type="ordered locus">HPSH_06710</name>
</gene>
<comment type="similarity">
    <text evidence="1">Belongs to the bacterial ribosomal protein bL36 family.</text>
</comment>
<organism>
    <name type="scientific">Helicobacter pylori (strain Shi470)</name>
    <dbReference type="NCBI Taxonomy" id="512562"/>
    <lineage>
        <taxon>Bacteria</taxon>
        <taxon>Pseudomonadati</taxon>
        <taxon>Campylobacterota</taxon>
        <taxon>Epsilonproteobacteria</taxon>
        <taxon>Campylobacterales</taxon>
        <taxon>Helicobacteraceae</taxon>
        <taxon>Helicobacter</taxon>
    </lineage>
</organism>